<dbReference type="EC" id="3.5.1.44" evidence="1"/>
<dbReference type="EMBL" id="AE008923">
    <property type="protein sequence ID" value="AAM36751.1"/>
    <property type="molecule type" value="Genomic_DNA"/>
</dbReference>
<dbReference type="RefSeq" id="WP_003486330.1">
    <property type="nucleotide sequence ID" value="NC_003919.1"/>
</dbReference>
<dbReference type="SMR" id="Q8PLB3"/>
<dbReference type="GeneID" id="97510255"/>
<dbReference type="KEGG" id="xac:XAC1889"/>
<dbReference type="eggNOG" id="COG1871">
    <property type="taxonomic scope" value="Bacteria"/>
</dbReference>
<dbReference type="HOGENOM" id="CLU_087854_0_0_6"/>
<dbReference type="Proteomes" id="UP000000576">
    <property type="component" value="Chromosome"/>
</dbReference>
<dbReference type="GO" id="GO:0050568">
    <property type="term" value="F:protein-glutamine glutaminase activity"/>
    <property type="evidence" value="ECO:0007669"/>
    <property type="project" value="UniProtKB-UniRule"/>
</dbReference>
<dbReference type="GO" id="GO:0006935">
    <property type="term" value="P:chemotaxis"/>
    <property type="evidence" value="ECO:0007669"/>
    <property type="project" value="UniProtKB-UniRule"/>
</dbReference>
<dbReference type="CDD" id="cd16352">
    <property type="entry name" value="CheD"/>
    <property type="match status" value="1"/>
</dbReference>
<dbReference type="Gene3D" id="3.30.1330.200">
    <property type="match status" value="1"/>
</dbReference>
<dbReference type="HAMAP" id="MF_01440">
    <property type="entry name" value="CheD"/>
    <property type="match status" value="1"/>
</dbReference>
<dbReference type="InterPro" id="IPR038592">
    <property type="entry name" value="CheD-like_sf"/>
</dbReference>
<dbReference type="InterPro" id="IPR005659">
    <property type="entry name" value="Chemorcpt_Glu_NH3ase_CheD"/>
</dbReference>
<dbReference type="InterPro" id="IPR011324">
    <property type="entry name" value="Cytotoxic_necrot_fac-like_cat"/>
</dbReference>
<dbReference type="NCBIfam" id="NF010013">
    <property type="entry name" value="PRK13487.1"/>
    <property type="match status" value="1"/>
</dbReference>
<dbReference type="PANTHER" id="PTHR35147">
    <property type="entry name" value="CHEMORECEPTOR GLUTAMINE DEAMIDASE CHED-RELATED"/>
    <property type="match status" value="1"/>
</dbReference>
<dbReference type="PANTHER" id="PTHR35147:SF2">
    <property type="entry name" value="CHEMORECEPTOR GLUTAMINE DEAMIDASE CHED-RELATED"/>
    <property type="match status" value="1"/>
</dbReference>
<dbReference type="Pfam" id="PF03975">
    <property type="entry name" value="CheD"/>
    <property type="match status" value="1"/>
</dbReference>
<dbReference type="SUPFAM" id="SSF64438">
    <property type="entry name" value="CNF1/YfiH-like putative cysteine hydrolases"/>
    <property type="match status" value="1"/>
</dbReference>
<comment type="function">
    <text evidence="1">Probably deamidates glutamine residues to glutamate on methyl-accepting chemotaxis receptors (MCPs), playing an important role in chemotaxis.</text>
</comment>
<comment type="catalytic activity">
    <reaction evidence="1">
        <text>L-glutaminyl-[protein] + H2O = L-glutamyl-[protein] + NH4(+)</text>
        <dbReference type="Rhea" id="RHEA:16441"/>
        <dbReference type="Rhea" id="RHEA-COMP:10207"/>
        <dbReference type="Rhea" id="RHEA-COMP:10208"/>
        <dbReference type="ChEBI" id="CHEBI:15377"/>
        <dbReference type="ChEBI" id="CHEBI:28938"/>
        <dbReference type="ChEBI" id="CHEBI:29973"/>
        <dbReference type="ChEBI" id="CHEBI:30011"/>
        <dbReference type="EC" id="3.5.1.44"/>
    </reaction>
</comment>
<comment type="similarity">
    <text evidence="1">Belongs to the CheD family.</text>
</comment>
<gene>
    <name evidence="1" type="primary">cheD</name>
    <name type="ordered locus">XAC1889</name>
</gene>
<keyword id="KW-0145">Chemotaxis</keyword>
<keyword id="KW-0378">Hydrolase</keyword>
<reference key="1">
    <citation type="journal article" date="2002" name="Nature">
        <title>Comparison of the genomes of two Xanthomonas pathogens with differing host specificities.</title>
        <authorList>
            <person name="da Silva A.C.R."/>
            <person name="Ferro J.A."/>
            <person name="Reinach F.C."/>
            <person name="Farah C.S."/>
            <person name="Furlan L.R."/>
            <person name="Quaggio R.B."/>
            <person name="Monteiro-Vitorello C.B."/>
            <person name="Van Sluys M.A."/>
            <person name="Almeida N.F. Jr."/>
            <person name="Alves L.M.C."/>
            <person name="do Amaral A.M."/>
            <person name="Bertolini M.C."/>
            <person name="Camargo L.E.A."/>
            <person name="Camarotte G."/>
            <person name="Cannavan F."/>
            <person name="Cardozo J."/>
            <person name="Chambergo F."/>
            <person name="Ciapina L.P."/>
            <person name="Cicarelli R.M.B."/>
            <person name="Coutinho L.L."/>
            <person name="Cursino-Santos J.R."/>
            <person name="El-Dorry H."/>
            <person name="Faria J.B."/>
            <person name="Ferreira A.J.S."/>
            <person name="Ferreira R.C.C."/>
            <person name="Ferro M.I.T."/>
            <person name="Formighieri E.F."/>
            <person name="Franco M.C."/>
            <person name="Greggio C.C."/>
            <person name="Gruber A."/>
            <person name="Katsuyama A.M."/>
            <person name="Kishi L.T."/>
            <person name="Leite R.P."/>
            <person name="Lemos E.G.M."/>
            <person name="Lemos M.V.F."/>
            <person name="Locali E.C."/>
            <person name="Machado M.A."/>
            <person name="Madeira A.M.B.N."/>
            <person name="Martinez-Rossi N.M."/>
            <person name="Martins E.C."/>
            <person name="Meidanis J."/>
            <person name="Menck C.F.M."/>
            <person name="Miyaki C.Y."/>
            <person name="Moon D.H."/>
            <person name="Moreira L.M."/>
            <person name="Novo M.T.M."/>
            <person name="Okura V.K."/>
            <person name="Oliveira M.C."/>
            <person name="Oliveira V.R."/>
            <person name="Pereira H.A."/>
            <person name="Rossi A."/>
            <person name="Sena J.A.D."/>
            <person name="Silva C."/>
            <person name="de Souza R.F."/>
            <person name="Spinola L.A.F."/>
            <person name="Takita M.A."/>
            <person name="Tamura R.E."/>
            <person name="Teixeira E.C."/>
            <person name="Tezza R.I.D."/>
            <person name="Trindade dos Santos M."/>
            <person name="Truffi D."/>
            <person name="Tsai S.M."/>
            <person name="White F.F."/>
            <person name="Setubal J.C."/>
            <person name="Kitajima J.P."/>
        </authorList>
    </citation>
    <scope>NUCLEOTIDE SEQUENCE [LARGE SCALE GENOMIC DNA]</scope>
    <source>
        <strain>306</strain>
    </source>
</reference>
<proteinExistence type="inferred from homology"/>
<feature type="chain" id="PRO_0000251079" description="Probable chemoreceptor glutamine deamidase CheD">
    <location>
        <begin position="1"/>
        <end position="198"/>
    </location>
</feature>
<sequence length="198" mass="21693">MSTAVQVDDVMRYRDSRFQTIAAKLLPTQYLVVDDDTALTTTLGSCVAACLRDPVLKIGGMNHFLLPEGQVGDGAPTRYGSYAMELLINDMLKRGAHRKRIEAKVFGGANVLKGFTSNPVGTRNAEFVRQYLQAEHIPIIAEDLCGIHPRKVWFFATTGRVVVQRLPHAHEAEVAATESAVRARLSKAPVTGGVELFE</sequence>
<protein>
    <recommendedName>
        <fullName evidence="1">Probable chemoreceptor glutamine deamidase CheD</fullName>
        <ecNumber evidence="1">3.5.1.44</ecNumber>
    </recommendedName>
</protein>
<organism>
    <name type="scientific">Xanthomonas axonopodis pv. citri (strain 306)</name>
    <dbReference type="NCBI Taxonomy" id="190486"/>
    <lineage>
        <taxon>Bacteria</taxon>
        <taxon>Pseudomonadati</taxon>
        <taxon>Pseudomonadota</taxon>
        <taxon>Gammaproteobacteria</taxon>
        <taxon>Lysobacterales</taxon>
        <taxon>Lysobacteraceae</taxon>
        <taxon>Xanthomonas</taxon>
    </lineage>
</organism>
<accession>Q8PLB3</accession>
<evidence type="ECO:0000255" key="1">
    <source>
        <dbReference type="HAMAP-Rule" id="MF_01440"/>
    </source>
</evidence>
<name>CHED_XANAC</name>